<protein>
    <recommendedName>
        <fullName>Protein U26</fullName>
    </recommendedName>
</protein>
<reference key="1">
    <citation type="journal article" date="1996" name="J. Virol.">
        <title>Determination and analysis of the complete nucleotide sequence of human herpesvirus.</title>
        <authorList>
            <person name="Nicholas J."/>
        </authorList>
    </citation>
    <scope>NUCLEOTIDE SEQUENCE [LARGE SCALE GENOMIC DNA]</scope>
</reference>
<comment type="subcellular location">
    <subcellularLocation>
        <location evidence="2">Membrane</location>
        <topology evidence="2">Multi-pass membrane protein</topology>
    </subcellularLocation>
</comment>
<name>VU26_HHV7J</name>
<gene>
    <name type="primary">U26</name>
</gene>
<accession>P52445</accession>
<dbReference type="EMBL" id="U43400">
    <property type="protein sequence ID" value="AAC54688.1"/>
    <property type="molecule type" value="Genomic_DNA"/>
</dbReference>
<dbReference type="PIR" id="T41928">
    <property type="entry name" value="T41928"/>
</dbReference>
<dbReference type="Proteomes" id="UP000009246">
    <property type="component" value="Segment"/>
</dbReference>
<dbReference type="GO" id="GO:0016020">
    <property type="term" value="C:membrane"/>
    <property type="evidence" value="ECO:0007669"/>
    <property type="project" value="UniProtKB-SubCell"/>
</dbReference>
<dbReference type="InterPro" id="IPR009980">
    <property type="entry name" value="Herpes_U26"/>
</dbReference>
<dbReference type="Pfam" id="PF07402">
    <property type="entry name" value="Herpes_U26"/>
    <property type="match status" value="1"/>
</dbReference>
<feature type="chain" id="PRO_0000116287" description="Protein U26">
    <location>
        <begin position="1"/>
        <end position="293"/>
    </location>
</feature>
<feature type="transmembrane region" description="Helical" evidence="1">
    <location>
        <begin position="4"/>
        <end position="24"/>
    </location>
</feature>
<feature type="transmembrane region" description="Helical" evidence="1">
    <location>
        <begin position="30"/>
        <end position="50"/>
    </location>
</feature>
<feature type="transmembrane region" description="Helical" evidence="1">
    <location>
        <begin position="71"/>
        <end position="91"/>
    </location>
</feature>
<feature type="transmembrane region" description="Helical" evidence="1">
    <location>
        <begin position="103"/>
        <end position="123"/>
    </location>
</feature>
<feature type="transmembrane region" description="Helical" evidence="1">
    <location>
        <begin position="133"/>
        <end position="153"/>
    </location>
</feature>
<feature type="transmembrane region" description="Helical" evidence="1">
    <location>
        <begin position="180"/>
        <end position="200"/>
    </location>
</feature>
<feature type="transmembrane region" description="Helical" evidence="1">
    <location>
        <begin position="220"/>
        <end position="240"/>
    </location>
</feature>
<feature type="transmembrane region" description="Helical" evidence="1">
    <location>
        <begin position="245"/>
        <end position="265"/>
    </location>
</feature>
<feature type="transmembrane region" description="Helical" evidence="1">
    <location>
        <begin position="273"/>
        <end position="293"/>
    </location>
</feature>
<proteinExistence type="predicted"/>
<keyword id="KW-0472">Membrane</keyword>
<keyword id="KW-1185">Reference proteome</keyword>
<keyword id="KW-0812">Transmembrane</keyword>
<keyword id="KW-1133">Transmembrane helix</keyword>
<sequence length="293" mass="33872">MWNVIISFSMGLVLGNVIPGESCFHLMIKKTLFEQVVLIFLFSGGLLLTYRRVNLFNYCPFNDLKIITLSLLVLQITDEFFLVICSFLFFSEIRLRAIVCRCMLIFPTHSMASYFGTLIAIVLKISDLVHYRLLVTVFLITPYVTSYKFLVNSHQFAMCLQRYKPIYKPNGPYQMAIKDVIVYLLQFLTLTLLVWFGKLYLPRKSCQHLFFLAVLHSNLFITKLYQLVLCSILCLLAGVITEHCFFSLLFEFFLGLGYSALFAQISKTVGRKDIFTGDLLNLFYCSACFVIFF</sequence>
<organism>
    <name type="scientific">Human herpesvirus 7 (strain JI)</name>
    <name type="common">HHV-7</name>
    <name type="synonym">Human T lymphotropic virus</name>
    <dbReference type="NCBI Taxonomy" id="57278"/>
    <lineage>
        <taxon>Viruses</taxon>
        <taxon>Duplodnaviria</taxon>
        <taxon>Heunggongvirae</taxon>
        <taxon>Peploviricota</taxon>
        <taxon>Herviviricetes</taxon>
        <taxon>Herpesvirales</taxon>
        <taxon>Orthoherpesviridae</taxon>
        <taxon>Betaherpesvirinae</taxon>
        <taxon>Roseolovirus</taxon>
        <taxon>Roseolovirus humanbeta7</taxon>
        <taxon>Human betaherpesvirus 7</taxon>
    </lineage>
</organism>
<organismHost>
    <name type="scientific">Homo sapiens</name>
    <name type="common">Human</name>
    <dbReference type="NCBI Taxonomy" id="9606"/>
</organismHost>
<evidence type="ECO:0000255" key="1"/>
<evidence type="ECO:0000305" key="2"/>